<comment type="function">
    <text evidence="1">This protein binds to the 23S rRNA, and is important in its secondary structure. It is located near the subunit interface in the base of the L7/L12 stalk, and near the tRNA binding site of the peptidyltransferase center.</text>
</comment>
<comment type="subunit">
    <text evidence="1">Part of the 50S ribosomal subunit.</text>
</comment>
<comment type="similarity">
    <text evidence="1">Belongs to the universal ribosomal protein uL6 family.</text>
</comment>
<sequence length="176" mass="18574">MSRIGKNPVVLPAGVEVTVGEQIVVKGPLGSLKTAAHSAVNVAVEGQNVTVSKVAGAANAAAMWGTMRANLNNMVTGVSKGFERKLQLVGVGYRAQAQGDTLNLSLGFSHPVAHKMPAGVKVECPTQTEILIKGSDKQQVGQVAAEIRAYRKPEPYKGKGVRYADEVVVIKETKKK</sequence>
<organism>
    <name type="scientific">Dechloromonas aromatica (strain RCB)</name>
    <dbReference type="NCBI Taxonomy" id="159087"/>
    <lineage>
        <taxon>Bacteria</taxon>
        <taxon>Pseudomonadati</taxon>
        <taxon>Pseudomonadota</taxon>
        <taxon>Betaproteobacteria</taxon>
        <taxon>Rhodocyclales</taxon>
        <taxon>Azonexaceae</taxon>
        <taxon>Dechloromonas</taxon>
    </lineage>
</organism>
<protein>
    <recommendedName>
        <fullName evidence="1">Large ribosomal subunit protein uL6</fullName>
    </recommendedName>
    <alternativeName>
        <fullName evidence="2">50S ribosomal protein L6</fullName>
    </alternativeName>
</protein>
<evidence type="ECO:0000255" key="1">
    <source>
        <dbReference type="HAMAP-Rule" id="MF_01365"/>
    </source>
</evidence>
<evidence type="ECO:0000305" key="2"/>
<gene>
    <name evidence="1" type="primary">rplF</name>
    <name type="ordered locus">Daro_0334</name>
</gene>
<proteinExistence type="inferred from homology"/>
<name>RL6_DECAR</name>
<keyword id="KW-0687">Ribonucleoprotein</keyword>
<keyword id="KW-0689">Ribosomal protein</keyword>
<keyword id="KW-0694">RNA-binding</keyword>
<keyword id="KW-0699">rRNA-binding</keyword>
<accession>Q47J88</accession>
<reference key="1">
    <citation type="journal article" date="2009" name="BMC Genomics">
        <title>Metabolic analysis of the soil microbe Dechloromonas aromatica str. RCB: indications of a surprisingly complex life-style and cryptic anaerobic pathways for aromatic degradation.</title>
        <authorList>
            <person name="Salinero K.K."/>
            <person name="Keller K."/>
            <person name="Feil W.S."/>
            <person name="Feil H."/>
            <person name="Trong S."/>
            <person name="Di Bartolo G."/>
            <person name="Lapidus A."/>
        </authorList>
    </citation>
    <scope>NUCLEOTIDE SEQUENCE [LARGE SCALE GENOMIC DNA]</scope>
    <source>
        <strain>RCB</strain>
    </source>
</reference>
<feature type="chain" id="PRO_0000260860" description="Large ribosomal subunit protein uL6">
    <location>
        <begin position="1"/>
        <end position="176"/>
    </location>
</feature>
<dbReference type="EMBL" id="CP000089">
    <property type="protein sequence ID" value="AAZ45093.1"/>
    <property type="molecule type" value="Genomic_DNA"/>
</dbReference>
<dbReference type="SMR" id="Q47J88"/>
<dbReference type="STRING" id="159087.Daro_0334"/>
<dbReference type="KEGG" id="dar:Daro_0334"/>
<dbReference type="eggNOG" id="COG0097">
    <property type="taxonomic scope" value="Bacteria"/>
</dbReference>
<dbReference type="HOGENOM" id="CLU_065464_1_2_4"/>
<dbReference type="OrthoDB" id="9805007at2"/>
<dbReference type="GO" id="GO:0022625">
    <property type="term" value="C:cytosolic large ribosomal subunit"/>
    <property type="evidence" value="ECO:0007669"/>
    <property type="project" value="TreeGrafter"/>
</dbReference>
<dbReference type="GO" id="GO:0019843">
    <property type="term" value="F:rRNA binding"/>
    <property type="evidence" value="ECO:0007669"/>
    <property type="project" value="UniProtKB-UniRule"/>
</dbReference>
<dbReference type="GO" id="GO:0003735">
    <property type="term" value="F:structural constituent of ribosome"/>
    <property type="evidence" value="ECO:0007669"/>
    <property type="project" value="InterPro"/>
</dbReference>
<dbReference type="GO" id="GO:0002181">
    <property type="term" value="P:cytoplasmic translation"/>
    <property type="evidence" value="ECO:0007669"/>
    <property type="project" value="TreeGrafter"/>
</dbReference>
<dbReference type="FunFam" id="3.90.930.12:FF:000001">
    <property type="entry name" value="50S ribosomal protein L6"/>
    <property type="match status" value="1"/>
</dbReference>
<dbReference type="Gene3D" id="3.90.930.12">
    <property type="entry name" value="Ribosomal protein L6, alpha-beta domain"/>
    <property type="match status" value="2"/>
</dbReference>
<dbReference type="HAMAP" id="MF_01365_B">
    <property type="entry name" value="Ribosomal_uL6_B"/>
    <property type="match status" value="1"/>
</dbReference>
<dbReference type="InterPro" id="IPR000702">
    <property type="entry name" value="Ribosomal_uL6-like"/>
</dbReference>
<dbReference type="InterPro" id="IPR036789">
    <property type="entry name" value="Ribosomal_uL6-like_a/b-dom_sf"/>
</dbReference>
<dbReference type="InterPro" id="IPR020040">
    <property type="entry name" value="Ribosomal_uL6_a/b-dom"/>
</dbReference>
<dbReference type="InterPro" id="IPR019906">
    <property type="entry name" value="Ribosomal_uL6_bac-type"/>
</dbReference>
<dbReference type="InterPro" id="IPR002358">
    <property type="entry name" value="Ribosomal_uL6_CS"/>
</dbReference>
<dbReference type="NCBIfam" id="TIGR03654">
    <property type="entry name" value="L6_bact"/>
    <property type="match status" value="1"/>
</dbReference>
<dbReference type="PANTHER" id="PTHR11655">
    <property type="entry name" value="60S/50S RIBOSOMAL PROTEIN L6/L9"/>
    <property type="match status" value="1"/>
</dbReference>
<dbReference type="PANTHER" id="PTHR11655:SF14">
    <property type="entry name" value="LARGE RIBOSOMAL SUBUNIT PROTEIN UL6M"/>
    <property type="match status" value="1"/>
</dbReference>
<dbReference type="Pfam" id="PF00347">
    <property type="entry name" value="Ribosomal_L6"/>
    <property type="match status" value="2"/>
</dbReference>
<dbReference type="PIRSF" id="PIRSF002162">
    <property type="entry name" value="Ribosomal_L6"/>
    <property type="match status" value="1"/>
</dbReference>
<dbReference type="PRINTS" id="PR00059">
    <property type="entry name" value="RIBOSOMALL6"/>
</dbReference>
<dbReference type="SUPFAM" id="SSF56053">
    <property type="entry name" value="Ribosomal protein L6"/>
    <property type="match status" value="2"/>
</dbReference>
<dbReference type="PROSITE" id="PS00525">
    <property type="entry name" value="RIBOSOMAL_L6_1"/>
    <property type="match status" value="1"/>
</dbReference>